<sequence>MSETQNTQVAKRQRTLVGKVVSNKMDKTVVVLVERRVKHPIFGKIIMRSAKYKAHDESNQYNEGDTVEIAEGRPISRSKAWRVVRLVEAARVI</sequence>
<organism>
    <name type="scientific">Bordetella bronchiseptica (strain ATCC BAA-588 / NCTC 13252 / RB50)</name>
    <name type="common">Alcaligenes bronchisepticus</name>
    <dbReference type="NCBI Taxonomy" id="257310"/>
    <lineage>
        <taxon>Bacteria</taxon>
        <taxon>Pseudomonadati</taxon>
        <taxon>Pseudomonadota</taxon>
        <taxon>Betaproteobacteria</taxon>
        <taxon>Burkholderiales</taxon>
        <taxon>Alcaligenaceae</taxon>
        <taxon>Bordetella</taxon>
    </lineage>
</organism>
<proteinExistence type="inferred from homology"/>
<name>RS17_BORBR</name>
<feature type="chain" id="PRO_0000233436" description="Small ribosomal subunit protein uS17">
    <location>
        <begin position="1"/>
        <end position="93"/>
    </location>
</feature>
<evidence type="ECO:0000255" key="1">
    <source>
        <dbReference type="HAMAP-Rule" id="MF_01345"/>
    </source>
</evidence>
<evidence type="ECO:0000305" key="2"/>
<dbReference type="EMBL" id="BX640437">
    <property type="protein sequence ID" value="CAE30540.1"/>
    <property type="molecule type" value="Genomic_DNA"/>
</dbReference>
<dbReference type="RefSeq" id="WP_003806913.1">
    <property type="nucleotide sequence ID" value="NC_002927.3"/>
</dbReference>
<dbReference type="SMR" id="Q7WRB6"/>
<dbReference type="GeneID" id="93206267"/>
<dbReference type="KEGG" id="bbr:BB0038"/>
<dbReference type="eggNOG" id="COG0186">
    <property type="taxonomic scope" value="Bacteria"/>
</dbReference>
<dbReference type="HOGENOM" id="CLU_073626_1_1_4"/>
<dbReference type="Proteomes" id="UP000001027">
    <property type="component" value="Chromosome"/>
</dbReference>
<dbReference type="GO" id="GO:0022627">
    <property type="term" value="C:cytosolic small ribosomal subunit"/>
    <property type="evidence" value="ECO:0007669"/>
    <property type="project" value="TreeGrafter"/>
</dbReference>
<dbReference type="GO" id="GO:0019843">
    <property type="term" value="F:rRNA binding"/>
    <property type="evidence" value="ECO:0007669"/>
    <property type="project" value="UniProtKB-UniRule"/>
</dbReference>
<dbReference type="GO" id="GO:0003735">
    <property type="term" value="F:structural constituent of ribosome"/>
    <property type="evidence" value="ECO:0007669"/>
    <property type="project" value="InterPro"/>
</dbReference>
<dbReference type="GO" id="GO:0006412">
    <property type="term" value="P:translation"/>
    <property type="evidence" value="ECO:0007669"/>
    <property type="project" value="UniProtKB-UniRule"/>
</dbReference>
<dbReference type="CDD" id="cd00364">
    <property type="entry name" value="Ribosomal_uS17"/>
    <property type="match status" value="1"/>
</dbReference>
<dbReference type="Gene3D" id="2.40.50.140">
    <property type="entry name" value="Nucleic acid-binding proteins"/>
    <property type="match status" value="1"/>
</dbReference>
<dbReference type="HAMAP" id="MF_01345_B">
    <property type="entry name" value="Ribosomal_uS17_B"/>
    <property type="match status" value="1"/>
</dbReference>
<dbReference type="InterPro" id="IPR012340">
    <property type="entry name" value="NA-bd_OB-fold"/>
</dbReference>
<dbReference type="InterPro" id="IPR000266">
    <property type="entry name" value="Ribosomal_uS17"/>
</dbReference>
<dbReference type="InterPro" id="IPR019984">
    <property type="entry name" value="Ribosomal_uS17_bact/chlr"/>
</dbReference>
<dbReference type="InterPro" id="IPR019979">
    <property type="entry name" value="Ribosomal_uS17_CS"/>
</dbReference>
<dbReference type="NCBIfam" id="NF004123">
    <property type="entry name" value="PRK05610.1"/>
    <property type="match status" value="1"/>
</dbReference>
<dbReference type="NCBIfam" id="TIGR03635">
    <property type="entry name" value="uS17_bact"/>
    <property type="match status" value="1"/>
</dbReference>
<dbReference type="PANTHER" id="PTHR10744">
    <property type="entry name" value="40S RIBOSOMAL PROTEIN S11 FAMILY MEMBER"/>
    <property type="match status" value="1"/>
</dbReference>
<dbReference type="PANTHER" id="PTHR10744:SF1">
    <property type="entry name" value="SMALL RIBOSOMAL SUBUNIT PROTEIN US17M"/>
    <property type="match status" value="1"/>
</dbReference>
<dbReference type="Pfam" id="PF00366">
    <property type="entry name" value="Ribosomal_S17"/>
    <property type="match status" value="1"/>
</dbReference>
<dbReference type="PRINTS" id="PR00973">
    <property type="entry name" value="RIBOSOMALS17"/>
</dbReference>
<dbReference type="SUPFAM" id="SSF50249">
    <property type="entry name" value="Nucleic acid-binding proteins"/>
    <property type="match status" value="1"/>
</dbReference>
<dbReference type="PROSITE" id="PS00056">
    <property type="entry name" value="RIBOSOMAL_S17"/>
    <property type="match status" value="1"/>
</dbReference>
<reference key="1">
    <citation type="journal article" date="2003" name="Nat. Genet.">
        <title>Comparative analysis of the genome sequences of Bordetella pertussis, Bordetella parapertussis and Bordetella bronchiseptica.</title>
        <authorList>
            <person name="Parkhill J."/>
            <person name="Sebaihia M."/>
            <person name="Preston A."/>
            <person name="Murphy L.D."/>
            <person name="Thomson N.R."/>
            <person name="Harris D.E."/>
            <person name="Holden M.T.G."/>
            <person name="Churcher C.M."/>
            <person name="Bentley S.D."/>
            <person name="Mungall K.L."/>
            <person name="Cerdeno-Tarraga A.-M."/>
            <person name="Temple L."/>
            <person name="James K.D."/>
            <person name="Harris B."/>
            <person name="Quail M.A."/>
            <person name="Achtman M."/>
            <person name="Atkin R."/>
            <person name="Baker S."/>
            <person name="Basham D."/>
            <person name="Bason N."/>
            <person name="Cherevach I."/>
            <person name="Chillingworth T."/>
            <person name="Collins M."/>
            <person name="Cronin A."/>
            <person name="Davis P."/>
            <person name="Doggett J."/>
            <person name="Feltwell T."/>
            <person name="Goble A."/>
            <person name="Hamlin N."/>
            <person name="Hauser H."/>
            <person name="Holroyd S."/>
            <person name="Jagels K."/>
            <person name="Leather S."/>
            <person name="Moule S."/>
            <person name="Norberczak H."/>
            <person name="O'Neil S."/>
            <person name="Ormond D."/>
            <person name="Price C."/>
            <person name="Rabbinowitsch E."/>
            <person name="Rutter S."/>
            <person name="Sanders M."/>
            <person name="Saunders D."/>
            <person name="Seeger K."/>
            <person name="Sharp S."/>
            <person name="Simmonds M."/>
            <person name="Skelton J."/>
            <person name="Squares R."/>
            <person name="Squares S."/>
            <person name="Stevens K."/>
            <person name="Unwin L."/>
            <person name="Whitehead S."/>
            <person name="Barrell B.G."/>
            <person name="Maskell D.J."/>
        </authorList>
    </citation>
    <scope>NUCLEOTIDE SEQUENCE [LARGE SCALE GENOMIC DNA]</scope>
    <source>
        <strain>ATCC BAA-588 / NCTC 13252 / RB50</strain>
    </source>
</reference>
<accession>Q7WRB6</accession>
<comment type="function">
    <text evidence="1">One of the primary rRNA binding proteins, it binds specifically to the 5'-end of 16S ribosomal RNA.</text>
</comment>
<comment type="subunit">
    <text evidence="1">Part of the 30S ribosomal subunit.</text>
</comment>
<comment type="similarity">
    <text evidence="1">Belongs to the universal ribosomal protein uS17 family.</text>
</comment>
<keyword id="KW-0687">Ribonucleoprotein</keyword>
<keyword id="KW-0689">Ribosomal protein</keyword>
<keyword id="KW-0694">RNA-binding</keyword>
<keyword id="KW-0699">rRNA-binding</keyword>
<gene>
    <name evidence="1" type="primary">rpsQ</name>
    <name type="ordered locus">BB0038</name>
</gene>
<protein>
    <recommendedName>
        <fullName evidence="1">Small ribosomal subunit protein uS17</fullName>
    </recommendedName>
    <alternativeName>
        <fullName evidence="2">30S ribosomal protein S17</fullName>
    </alternativeName>
</protein>